<reference key="1">
    <citation type="journal article" date="2011" name="J. Bacteriol.">
        <title>Complete genome sequence of the metabolically versatile plant growth-promoting endophyte, Variovorax paradoxus S110.</title>
        <authorList>
            <person name="Han J.I."/>
            <person name="Choi H.K."/>
            <person name="Lee S.W."/>
            <person name="Orwin P.M."/>
            <person name="Kim J."/>
            <person name="Laroe S.L."/>
            <person name="Kim T.G."/>
            <person name="O'Neil J."/>
            <person name="Leadbetter J.R."/>
            <person name="Lee S.Y."/>
            <person name="Hur C.G."/>
            <person name="Spain J.C."/>
            <person name="Ovchinnikova G."/>
            <person name="Goodwin L."/>
            <person name="Han C."/>
        </authorList>
    </citation>
    <scope>NUCLEOTIDE SEQUENCE [LARGE SCALE GENOMIC DNA]</scope>
    <source>
        <strain>S110</strain>
    </source>
</reference>
<sequence length="263" mass="28851">MQEILNIAAYKFVAIDDSPVLREDLRERAQALGLMGTILLAPEGINLFLAGLPDAVRSFVAGLRADVRFADLETKESWSAAQPFRRMLVKLKREIIRMDHPAIQPAAGRAPGVDAPTLKRWLDQGHDDEGREIALLDTRNDFEVDEGSFDGAIDWRITKFTEFPPALKAHRADFAGKTVVSFCTGGIRCEKAAILMREEGIENVLQLEGGILKYFEEVGGAHYHGDCFVFDGRRALAPDLSARAADASARAAEDVGLSSGLKK</sequence>
<accession>C5CPZ9</accession>
<dbReference type="EC" id="1.14.-.-" evidence="1"/>
<dbReference type="EMBL" id="CP001635">
    <property type="protein sequence ID" value="ACS19738.1"/>
    <property type="molecule type" value="Genomic_DNA"/>
</dbReference>
<dbReference type="SMR" id="C5CPZ9"/>
<dbReference type="STRING" id="543728.Vapar_3119"/>
<dbReference type="KEGG" id="vap:Vapar_3119"/>
<dbReference type="eggNOG" id="COG1054">
    <property type="taxonomic scope" value="Bacteria"/>
</dbReference>
<dbReference type="HOGENOM" id="CLU_038878_0_1_4"/>
<dbReference type="OrthoDB" id="9778326at2"/>
<dbReference type="GO" id="GO:0016705">
    <property type="term" value="F:oxidoreductase activity, acting on paired donors, with incorporation or reduction of molecular oxygen"/>
    <property type="evidence" value="ECO:0007669"/>
    <property type="project" value="UniProtKB-UniRule"/>
</dbReference>
<dbReference type="GO" id="GO:0006400">
    <property type="term" value="P:tRNA modification"/>
    <property type="evidence" value="ECO:0007669"/>
    <property type="project" value="UniProtKB-UniRule"/>
</dbReference>
<dbReference type="Gene3D" id="3.30.70.100">
    <property type="match status" value="1"/>
</dbReference>
<dbReference type="Gene3D" id="3.40.250.10">
    <property type="entry name" value="Rhodanese-like domain"/>
    <property type="match status" value="1"/>
</dbReference>
<dbReference type="HAMAP" id="MF_00469">
    <property type="entry name" value="TrhO"/>
    <property type="match status" value="1"/>
</dbReference>
<dbReference type="InterPro" id="IPR001763">
    <property type="entry name" value="Rhodanese-like_dom"/>
</dbReference>
<dbReference type="InterPro" id="IPR036873">
    <property type="entry name" value="Rhodanese-like_dom_sf"/>
</dbReference>
<dbReference type="InterPro" id="IPR020936">
    <property type="entry name" value="TrhO"/>
</dbReference>
<dbReference type="InterPro" id="IPR040503">
    <property type="entry name" value="TRHO_N"/>
</dbReference>
<dbReference type="NCBIfam" id="NF003703">
    <property type="entry name" value="PRK05320.1"/>
    <property type="match status" value="1"/>
</dbReference>
<dbReference type="PANTHER" id="PTHR43268:SF3">
    <property type="entry name" value="RHODANESE-LIKE DOMAIN-CONTAINING PROTEIN 7-RELATED"/>
    <property type="match status" value="1"/>
</dbReference>
<dbReference type="PANTHER" id="PTHR43268">
    <property type="entry name" value="THIOSULFATE SULFURTRANSFERASE/RHODANESE-LIKE DOMAIN-CONTAINING PROTEIN 2"/>
    <property type="match status" value="1"/>
</dbReference>
<dbReference type="Pfam" id="PF00581">
    <property type="entry name" value="Rhodanese"/>
    <property type="match status" value="1"/>
</dbReference>
<dbReference type="Pfam" id="PF17773">
    <property type="entry name" value="UPF0176_N"/>
    <property type="match status" value="1"/>
</dbReference>
<dbReference type="SMART" id="SM00450">
    <property type="entry name" value="RHOD"/>
    <property type="match status" value="1"/>
</dbReference>
<dbReference type="SUPFAM" id="SSF52821">
    <property type="entry name" value="Rhodanese/Cell cycle control phosphatase"/>
    <property type="match status" value="1"/>
</dbReference>
<dbReference type="PROSITE" id="PS50206">
    <property type="entry name" value="RHODANESE_3"/>
    <property type="match status" value="1"/>
</dbReference>
<organism>
    <name type="scientific">Variovorax paradoxus (strain S110)</name>
    <dbReference type="NCBI Taxonomy" id="543728"/>
    <lineage>
        <taxon>Bacteria</taxon>
        <taxon>Pseudomonadati</taxon>
        <taxon>Pseudomonadota</taxon>
        <taxon>Betaproteobacteria</taxon>
        <taxon>Burkholderiales</taxon>
        <taxon>Comamonadaceae</taxon>
        <taxon>Variovorax</taxon>
    </lineage>
</organism>
<proteinExistence type="inferred from homology"/>
<evidence type="ECO:0000255" key="1">
    <source>
        <dbReference type="HAMAP-Rule" id="MF_00469"/>
    </source>
</evidence>
<protein>
    <recommendedName>
        <fullName evidence="1">tRNA uridine(34) hydroxylase</fullName>
        <ecNumber evidence="1">1.14.-.-</ecNumber>
    </recommendedName>
    <alternativeName>
        <fullName evidence="1">tRNA hydroxylation protein O</fullName>
    </alternativeName>
</protein>
<gene>
    <name evidence="1" type="primary">trhO</name>
    <name type="ordered locus">Vapar_3119</name>
</gene>
<feature type="chain" id="PRO_1000206344" description="tRNA uridine(34) hydroxylase">
    <location>
        <begin position="1"/>
        <end position="263"/>
    </location>
</feature>
<feature type="domain" description="Rhodanese" evidence="1">
    <location>
        <begin position="129"/>
        <end position="223"/>
    </location>
</feature>
<feature type="active site" description="Cysteine persulfide intermediate" evidence="1">
    <location>
        <position position="183"/>
    </location>
</feature>
<keyword id="KW-0560">Oxidoreductase</keyword>
<keyword id="KW-0819">tRNA processing</keyword>
<comment type="function">
    <text evidence="1">Catalyzes oxygen-dependent 5-hydroxyuridine (ho5U) modification at position 34 in tRNAs.</text>
</comment>
<comment type="catalytic activity">
    <reaction evidence="1">
        <text>uridine(34) in tRNA + AH2 + O2 = 5-hydroxyuridine(34) in tRNA + A + H2O</text>
        <dbReference type="Rhea" id="RHEA:64224"/>
        <dbReference type="Rhea" id="RHEA-COMP:11727"/>
        <dbReference type="Rhea" id="RHEA-COMP:13381"/>
        <dbReference type="ChEBI" id="CHEBI:13193"/>
        <dbReference type="ChEBI" id="CHEBI:15377"/>
        <dbReference type="ChEBI" id="CHEBI:15379"/>
        <dbReference type="ChEBI" id="CHEBI:17499"/>
        <dbReference type="ChEBI" id="CHEBI:65315"/>
        <dbReference type="ChEBI" id="CHEBI:136877"/>
    </reaction>
</comment>
<comment type="similarity">
    <text evidence="1">Belongs to the TrhO family.</text>
</comment>
<name>TRHO_VARPS</name>